<feature type="chain" id="PRO_1000067285" description="Multifunctional CCA protein">
    <location>
        <begin position="1"/>
        <end position="412"/>
    </location>
</feature>
<feature type="domain" description="HD" evidence="1">
    <location>
        <begin position="228"/>
        <end position="329"/>
    </location>
</feature>
<feature type="binding site" evidence="1">
    <location>
        <position position="8"/>
    </location>
    <ligand>
        <name>ATP</name>
        <dbReference type="ChEBI" id="CHEBI:30616"/>
    </ligand>
</feature>
<feature type="binding site" evidence="1">
    <location>
        <position position="8"/>
    </location>
    <ligand>
        <name>CTP</name>
        <dbReference type="ChEBI" id="CHEBI:37563"/>
    </ligand>
</feature>
<feature type="binding site" evidence="1">
    <location>
        <position position="11"/>
    </location>
    <ligand>
        <name>ATP</name>
        <dbReference type="ChEBI" id="CHEBI:30616"/>
    </ligand>
</feature>
<feature type="binding site" evidence="1">
    <location>
        <position position="11"/>
    </location>
    <ligand>
        <name>CTP</name>
        <dbReference type="ChEBI" id="CHEBI:37563"/>
    </ligand>
</feature>
<feature type="binding site" evidence="1">
    <location>
        <position position="21"/>
    </location>
    <ligand>
        <name>Mg(2+)</name>
        <dbReference type="ChEBI" id="CHEBI:18420"/>
    </ligand>
</feature>
<feature type="binding site" evidence="1">
    <location>
        <position position="23"/>
    </location>
    <ligand>
        <name>Mg(2+)</name>
        <dbReference type="ChEBI" id="CHEBI:18420"/>
    </ligand>
</feature>
<feature type="binding site" evidence="1">
    <location>
        <position position="91"/>
    </location>
    <ligand>
        <name>ATP</name>
        <dbReference type="ChEBI" id="CHEBI:30616"/>
    </ligand>
</feature>
<feature type="binding site" evidence="1">
    <location>
        <position position="91"/>
    </location>
    <ligand>
        <name>CTP</name>
        <dbReference type="ChEBI" id="CHEBI:37563"/>
    </ligand>
</feature>
<feature type="binding site" evidence="1">
    <location>
        <position position="137"/>
    </location>
    <ligand>
        <name>ATP</name>
        <dbReference type="ChEBI" id="CHEBI:30616"/>
    </ligand>
</feature>
<feature type="binding site" evidence="1">
    <location>
        <position position="137"/>
    </location>
    <ligand>
        <name>CTP</name>
        <dbReference type="ChEBI" id="CHEBI:37563"/>
    </ligand>
</feature>
<feature type="binding site" evidence="1">
    <location>
        <position position="140"/>
    </location>
    <ligand>
        <name>ATP</name>
        <dbReference type="ChEBI" id="CHEBI:30616"/>
    </ligand>
</feature>
<feature type="binding site" evidence="1">
    <location>
        <position position="140"/>
    </location>
    <ligand>
        <name>CTP</name>
        <dbReference type="ChEBI" id="CHEBI:37563"/>
    </ligand>
</feature>
<accession>A7ZRT7</accession>
<reference key="1">
    <citation type="journal article" date="2008" name="J. Bacteriol.">
        <title>The pangenome structure of Escherichia coli: comparative genomic analysis of E. coli commensal and pathogenic isolates.</title>
        <authorList>
            <person name="Rasko D.A."/>
            <person name="Rosovitz M.J."/>
            <person name="Myers G.S.A."/>
            <person name="Mongodin E.F."/>
            <person name="Fricke W.F."/>
            <person name="Gajer P."/>
            <person name="Crabtree J."/>
            <person name="Sebaihia M."/>
            <person name="Thomson N.R."/>
            <person name="Chaudhuri R."/>
            <person name="Henderson I.R."/>
            <person name="Sperandio V."/>
            <person name="Ravel J."/>
        </authorList>
    </citation>
    <scope>NUCLEOTIDE SEQUENCE [LARGE SCALE GENOMIC DNA]</scope>
    <source>
        <strain>E24377A / ETEC</strain>
    </source>
</reference>
<organism>
    <name type="scientific">Escherichia coli O139:H28 (strain E24377A / ETEC)</name>
    <dbReference type="NCBI Taxonomy" id="331111"/>
    <lineage>
        <taxon>Bacteria</taxon>
        <taxon>Pseudomonadati</taxon>
        <taxon>Pseudomonadota</taxon>
        <taxon>Gammaproteobacteria</taxon>
        <taxon>Enterobacterales</taxon>
        <taxon>Enterobacteriaceae</taxon>
        <taxon>Escherichia</taxon>
    </lineage>
</organism>
<proteinExistence type="inferred from homology"/>
<sequence length="412" mass="46525">MKIYLVGGAVRDALLGLPVKDRDWVVVGSTPQEMLDAGYQQVGRDFPVFLHPQTHEEYALARTERKSGSGYTGFTCYAAPDVTLEDDLKRRDLTINALAQDDNGEIIDPYNGLGDLQNRLLRHVSPAFGEDPLRVLRVARFAARYAHLGFRIADETLTLMREMTHAGELEHLTPERVWKETESALTTRNPQVFFQVLRDCGALRVLFPEIDALFGVPAPARWHPEIDTGIHTLMTLSMAAMLSPQVDVRFATLCHDLGKGLTPPELWPRHHGHGPAGVKLVEQLCQRLRVPNEIRDLARLVAEFHDLIHTFPMLNPKTIVKLFDSIDAWRKPQRVEQLALTSEADVRGRTGFESADYPQGRWLREAWEVAQSVPTKAVVEAGFKGVEIREELTRRRIAAIASWKEQRCPKPD</sequence>
<evidence type="ECO:0000255" key="1">
    <source>
        <dbReference type="HAMAP-Rule" id="MF_01261"/>
    </source>
</evidence>
<comment type="function">
    <text evidence="1">Catalyzes the addition and repair of the essential 3'-terminal CCA sequence in tRNAs without using a nucleic acid template. Adds these three nucleotides in the order of C, C, and A to the tRNA nucleotide-73, using CTP and ATP as substrates and producing inorganic pyrophosphate. tRNA 3'-terminal CCA addition is required both for tRNA processing and repair. Also involved in tRNA surveillance by mediating tandem CCA addition to generate a CCACCA at the 3' terminus of unstable tRNAs. While stable tRNAs receive only 3'-terminal CCA, unstable tRNAs are marked with CCACCA and rapidly degraded.</text>
</comment>
<comment type="catalytic activity">
    <reaction evidence="1">
        <text>a tRNA precursor + 2 CTP + ATP = a tRNA with a 3' CCA end + 3 diphosphate</text>
        <dbReference type="Rhea" id="RHEA:14433"/>
        <dbReference type="Rhea" id="RHEA-COMP:10465"/>
        <dbReference type="Rhea" id="RHEA-COMP:10468"/>
        <dbReference type="ChEBI" id="CHEBI:30616"/>
        <dbReference type="ChEBI" id="CHEBI:33019"/>
        <dbReference type="ChEBI" id="CHEBI:37563"/>
        <dbReference type="ChEBI" id="CHEBI:74896"/>
        <dbReference type="ChEBI" id="CHEBI:83071"/>
        <dbReference type="EC" id="2.7.7.72"/>
    </reaction>
</comment>
<comment type="catalytic activity">
    <reaction evidence="1">
        <text>a tRNA with a 3' CCA end + 2 CTP + ATP = a tRNA with a 3' CCACCA end + 3 diphosphate</text>
        <dbReference type="Rhea" id="RHEA:76235"/>
        <dbReference type="Rhea" id="RHEA-COMP:10468"/>
        <dbReference type="Rhea" id="RHEA-COMP:18655"/>
        <dbReference type="ChEBI" id="CHEBI:30616"/>
        <dbReference type="ChEBI" id="CHEBI:33019"/>
        <dbReference type="ChEBI" id="CHEBI:37563"/>
        <dbReference type="ChEBI" id="CHEBI:83071"/>
        <dbReference type="ChEBI" id="CHEBI:195187"/>
    </reaction>
    <physiologicalReaction direction="left-to-right" evidence="1">
        <dbReference type="Rhea" id="RHEA:76236"/>
    </physiologicalReaction>
</comment>
<comment type="cofactor">
    <cofactor evidence="1">
        <name>Mg(2+)</name>
        <dbReference type="ChEBI" id="CHEBI:18420"/>
    </cofactor>
    <text evidence="1">Magnesium is required for nucleotidyltransferase activity.</text>
</comment>
<comment type="cofactor">
    <cofactor evidence="1">
        <name>Ni(2+)</name>
        <dbReference type="ChEBI" id="CHEBI:49786"/>
    </cofactor>
    <text evidence="1">Nickel for phosphatase activity.</text>
</comment>
<comment type="subunit">
    <text evidence="1">Monomer. Can also form homodimers and oligomers.</text>
</comment>
<comment type="domain">
    <text evidence="1">Comprises two domains: an N-terminal domain containing the nucleotidyltransferase activity and a C-terminal HD domain associated with both phosphodiesterase and phosphatase activities.</text>
</comment>
<comment type="miscellaneous">
    <text evidence="1">A single active site specifically recognizes both ATP and CTP and is responsible for their addition.</text>
</comment>
<comment type="similarity">
    <text evidence="1">Belongs to the tRNA nucleotidyltransferase/poly(A) polymerase family. Bacterial CCA-adding enzyme type 1 subfamily.</text>
</comment>
<name>CCA_ECO24</name>
<gene>
    <name evidence="1" type="primary">cca</name>
    <name type="ordered locus">EcE24377A_3519</name>
</gene>
<protein>
    <recommendedName>
        <fullName evidence="1">Multifunctional CCA protein</fullName>
    </recommendedName>
    <domain>
        <recommendedName>
            <fullName evidence="1">CCA-adding enzyme</fullName>
            <ecNumber evidence="1">2.7.7.72</ecNumber>
        </recommendedName>
        <alternativeName>
            <fullName evidence="1">CCA tRNA nucleotidyltransferase</fullName>
        </alternativeName>
        <alternativeName>
            <fullName evidence="1">tRNA CCA-pyrophosphorylase</fullName>
        </alternativeName>
        <alternativeName>
            <fullName evidence="1">tRNA adenylyl-/cytidylyl-transferase</fullName>
        </alternativeName>
        <alternativeName>
            <fullName evidence="1">tRNA nucleotidyltransferase</fullName>
        </alternativeName>
        <alternativeName>
            <fullName evidence="1">tRNA-NT</fullName>
        </alternativeName>
    </domain>
    <domain>
        <recommendedName>
            <fullName evidence="1">2'-nucleotidase</fullName>
            <ecNumber evidence="1">3.1.3.-</ecNumber>
        </recommendedName>
    </domain>
    <domain>
        <recommendedName>
            <fullName evidence="1">2',3'-cyclic phosphodiesterase</fullName>
            <ecNumber evidence="1">3.1.4.-</ecNumber>
        </recommendedName>
    </domain>
    <domain>
        <recommendedName>
            <fullName evidence="1">Phosphatase</fullName>
            <ecNumber evidence="1">3.1.3.-</ecNumber>
        </recommendedName>
    </domain>
</protein>
<dbReference type="EC" id="2.7.7.72" evidence="1"/>
<dbReference type="EC" id="3.1.3.-" evidence="1"/>
<dbReference type="EC" id="3.1.4.-" evidence="1"/>
<dbReference type="EMBL" id="CP000800">
    <property type="protein sequence ID" value="ABV17308.1"/>
    <property type="molecule type" value="Genomic_DNA"/>
</dbReference>
<dbReference type="RefSeq" id="WP_000708500.1">
    <property type="nucleotide sequence ID" value="NC_009801.1"/>
</dbReference>
<dbReference type="SMR" id="A7ZRT7"/>
<dbReference type="GeneID" id="75205357"/>
<dbReference type="KEGG" id="ecw:EcE24377A_3519"/>
<dbReference type="HOGENOM" id="CLU_015961_1_1_6"/>
<dbReference type="Proteomes" id="UP000001122">
    <property type="component" value="Chromosome"/>
</dbReference>
<dbReference type="GO" id="GO:0005524">
    <property type="term" value="F:ATP binding"/>
    <property type="evidence" value="ECO:0007669"/>
    <property type="project" value="UniProtKB-UniRule"/>
</dbReference>
<dbReference type="GO" id="GO:0004810">
    <property type="term" value="F:CCA tRNA nucleotidyltransferase activity"/>
    <property type="evidence" value="ECO:0007669"/>
    <property type="project" value="UniProtKB-UniRule"/>
</dbReference>
<dbReference type="GO" id="GO:0004112">
    <property type="term" value="F:cyclic-nucleotide phosphodiesterase activity"/>
    <property type="evidence" value="ECO:0007669"/>
    <property type="project" value="UniProtKB-UniRule"/>
</dbReference>
<dbReference type="GO" id="GO:0000287">
    <property type="term" value="F:magnesium ion binding"/>
    <property type="evidence" value="ECO:0007669"/>
    <property type="project" value="UniProtKB-UniRule"/>
</dbReference>
<dbReference type="GO" id="GO:0016791">
    <property type="term" value="F:phosphatase activity"/>
    <property type="evidence" value="ECO:0007669"/>
    <property type="project" value="UniProtKB-UniRule"/>
</dbReference>
<dbReference type="GO" id="GO:0000049">
    <property type="term" value="F:tRNA binding"/>
    <property type="evidence" value="ECO:0007669"/>
    <property type="project" value="UniProtKB-UniRule"/>
</dbReference>
<dbReference type="GO" id="GO:0042245">
    <property type="term" value="P:RNA repair"/>
    <property type="evidence" value="ECO:0007669"/>
    <property type="project" value="UniProtKB-KW"/>
</dbReference>
<dbReference type="GO" id="GO:0001680">
    <property type="term" value="P:tRNA 3'-terminal CCA addition"/>
    <property type="evidence" value="ECO:0007669"/>
    <property type="project" value="UniProtKB-UniRule"/>
</dbReference>
<dbReference type="CDD" id="cd00077">
    <property type="entry name" value="HDc"/>
    <property type="match status" value="1"/>
</dbReference>
<dbReference type="CDD" id="cd05398">
    <property type="entry name" value="NT_ClassII-CCAase"/>
    <property type="match status" value="1"/>
</dbReference>
<dbReference type="FunFam" id="1.10.3090.10:FF:000001">
    <property type="entry name" value="Multifunctional CCA protein"/>
    <property type="match status" value="1"/>
</dbReference>
<dbReference type="FunFam" id="3.30.460.10:FF:000016">
    <property type="entry name" value="Multifunctional CCA protein"/>
    <property type="match status" value="1"/>
</dbReference>
<dbReference type="Gene3D" id="3.30.460.10">
    <property type="entry name" value="Beta Polymerase, domain 2"/>
    <property type="match status" value="1"/>
</dbReference>
<dbReference type="Gene3D" id="1.10.3090.10">
    <property type="entry name" value="cca-adding enzyme, domain 2"/>
    <property type="match status" value="1"/>
</dbReference>
<dbReference type="HAMAP" id="MF_01261">
    <property type="entry name" value="CCA_bact_type1"/>
    <property type="match status" value="1"/>
</dbReference>
<dbReference type="HAMAP" id="MF_01262">
    <property type="entry name" value="CCA_bact_type2"/>
    <property type="match status" value="1"/>
</dbReference>
<dbReference type="InterPro" id="IPR012006">
    <property type="entry name" value="CCA_bact"/>
</dbReference>
<dbReference type="InterPro" id="IPR003607">
    <property type="entry name" value="HD/PDEase_dom"/>
</dbReference>
<dbReference type="InterPro" id="IPR006674">
    <property type="entry name" value="HD_domain"/>
</dbReference>
<dbReference type="InterPro" id="IPR043519">
    <property type="entry name" value="NT_sf"/>
</dbReference>
<dbReference type="InterPro" id="IPR002646">
    <property type="entry name" value="PolA_pol_head_dom"/>
</dbReference>
<dbReference type="InterPro" id="IPR032828">
    <property type="entry name" value="PolyA_RNA-bd"/>
</dbReference>
<dbReference type="InterPro" id="IPR050124">
    <property type="entry name" value="tRNA_CCA-adding_enzyme"/>
</dbReference>
<dbReference type="NCBIfam" id="NF008137">
    <property type="entry name" value="PRK10885.1"/>
    <property type="match status" value="1"/>
</dbReference>
<dbReference type="PANTHER" id="PTHR47545">
    <property type="entry name" value="MULTIFUNCTIONAL CCA PROTEIN"/>
    <property type="match status" value="1"/>
</dbReference>
<dbReference type="PANTHER" id="PTHR47545:SF1">
    <property type="entry name" value="MULTIFUNCTIONAL CCA PROTEIN"/>
    <property type="match status" value="1"/>
</dbReference>
<dbReference type="Pfam" id="PF01966">
    <property type="entry name" value="HD"/>
    <property type="match status" value="1"/>
</dbReference>
<dbReference type="Pfam" id="PF01743">
    <property type="entry name" value="PolyA_pol"/>
    <property type="match status" value="1"/>
</dbReference>
<dbReference type="Pfam" id="PF12627">
    <property type="entry name" value="PolyA_pol_RNAbd"/>
    <property type="match status" value="1"/>
</dbReference>
<dbReference type="PIRSF" id="PIRSF000813">
    <property type="entry name" value="CCA_bact"/>
    <property type="match status" value="1"/>
</dbReference>
<dbReference type="SUPFAM" id="SSF81301">
    <property type="entry name" value="Nucleotidyltransferase"/>
    <property type="match status" value="1"/>
</dbReference>
<dbReference type="SUPFAM" id="SSF81891">
    <property type="entry name" value="Poly A polymerase C-terminal region-like"/>
    <property type="match status" value="1"/>
</dbReference>
<dbReference type="PROSITE" id="PS51831">
    <property type="entry name" value="HD"/>
    <property type="match status" value="1"/>
</dbReference>
<keyword id="KW-0067">ATP-binding</keyword>
<keyword id="KW-0378">Hydrolase</keyword>
<keyword id="KW-0460">Magnesium</keyword>
<keyword id="KW-0479">Metal-binding</keyword>
<keyword id="KW-0511">Multifunctional enzyme</keyword>
<keyword id="KW-0533">Nickel</keyword>
<keyword id="KW-0547">Nucleotide-binding</keyword>
<keyword id="KW-0548">Nucleotidyltransferase</keyword>
<keyword id="KW-1185">Reference proteome</keyword>
<keyword id="KW-0692">RNA repair</keyword>
<keyword id="KW-0694">RNA-binding</keyword>
<keyword id="KW-0808">Transferase</keyword>
<keyword id="KW-0819">tRNA processing</keyword>